<gene>
    <name type="ORF">DDB_G0271682</name>
</gene>
<evidence type="ECO:0000255" key="1">
    <source>
        <dbReference type="PROSITE-ProRule" id="PRU00159"/>
    </source>
</evidence>
<evidence type="ECO:0000255" key="2">
    <source>
        <dbReference type="PROSITE-ProRule" id="PRU10027"/>
    </source>
</evidence>
<evidence type="ECO:0000256" key="3">
    <source>
        <dbReference type="SAM" id="MobiDB-lite"/>
    </source>
</evidence>
<evidence type="ECO:0000305" key="4"/>
<feature type="chain" id="PRO_0000355166" description="Probable serine/threonine-protein kinase DDB_G0271682">
    <location>
        <begin position="1"/>
        <end position="1024"/>
    </location>
</feature>
<feature type="domain" description="Protein kinase 1" evidence="1">
    <location>
        <begin position="360"/>
        <end position="609"/>
    </location>
</feature>
<feature type="domain" description="Protein kinase 2" evidence="1">
    <location>
        <begin position="645"/>
        <end position="1018"/>
    </location>
</feature>
<feature type="region of interest" description="Disordered" evidence="3">
    <location>
        <begin position="187"/>
        <end position="261"/>
    </location>
</feature>
<feature type="region of interest" description="Disordered" evidence="3">
    <location>
        <begin position="823"/>
        <end position="874"/>
    </location>
</feature>
<feature type="compositionally biased region" description="Low complexity" evidence="3">
    <location>
        <begin position="190"/>
        <end position="244"/>
    </location>
</feature>
<feature type="compositionally biased region" description="Basic and acidic residues" evidence="3">
    <location>
        <begin position="250"/>
        <end position="261"/>
    </location>
</feature>
<feature type="compositionally biased region" description="Low complexity" evidence="3">
    <location>
        <begin position="823"/>
        <end position="851"/>
    </location>
</feature>
<feature type="compositionally biased region" description="Low complexity" evidence="3">
    <location>
        <begin position="862"/>
        <end position="874"/>
    </location>
</feature>
<feature type="active site" description="Proton acceptor" evidence="1 2">
    <location>
        <position position="484"/>
    </location>
</feature>
<feature type="binding site" evidence="1">
    <location>
        <begin position="366"/>
        <end position="374"/>
    </location>
    <ligand>
        <name>ATP</name>
        <dbReference type="ChEBI" id="CHEBI:30616"/>
    </ligand>
</feature>
<feature type="binding site" evidence="1">
    <location>
        <position position="387"/>
    </location>
    <ligand>
        <name>ATP</name>
        <dbReference type="ChEBI" id="CHEBI:30616"/>
    </ligand>
</feature>
<feature type="binding site" evidence="1">
    <location>
        <begin position="651"/>
        <end position="659"/>
    </location>
    <ligand>
        <name>ATP</name>
        <dbReference type="ChEBI" id="CHEBI:30616"/>
    </ligand>
</feature>
<feature type="binding site" evidence="1">
    <location>
        <position position="719"/>
    </location>
    <ligand>
        <name>ATP</name>
        <dbReference type="ChEBI" id="CHEBI:30616"/>
    </ligand>
</feature>
<dbReference type="EC" id="2.7.11.1"/>
<dbReference type="EMBL" id="AAFI02000006">
    <property type="protein sequence ID" value="EAL71531.1"/>
    <property type="molecule type" value="Genomic_DNA"/>
</dbReference>
<dbReference type="RefSeq" id="XP_645485.1">
    <property type="nucleotide sequence ID" value="XM_640393.1"/>
</dbReference>
<dbReference type="SMR" id="Q86HG9"/>
<dbReference type="STRING" id="44689.Q86HG9"/>
<dbReference type="PaxDb" id="44689-DDB0229871"/>
<dbReference type="EnsemblProtists" id="EAL71531">
    <property type="protein sequence ID" value="EAL71531"/>
    <property type="gene ID" value="DDB_G0271682"/>
</dbReference>
<dbReference type="GeneID" id="8618113"/>
<dbReference type="KEGG" id="ddi:DDB_G0271682"/>
<dbReference type="dictyBase" id="DDB_G0271682"/>
<dbReference type="VEuPathDB" id="AmoebaDB:DDB_G0271682"/>
<dbReference type="eggNOG" id="KOG0192">
    <property type="taxonomic scope" value="Eukaryota"/>
</dbReference>
<dbReference type="HOGENOM" id="CLU_295512_0_0_1"/>
<dbReference type="InParanoid" id="Q86HG9"/>
<dbReference type="OMA" id="VHENIKN"/>
<dbReference type="PhylomeDB" id="Q86HG9"/>
<dbReference type="PRO" id="PR:Q86HG9"/>
<dbReference type="Proteomes" id="UP000002195">
    <property type="component" value="Chromosome 2"/>
</dbReference>
<dbReference type="GO" id="GO:0005737">
    <property type="term" value="C:cytoplasm"/>
    <property type="evidence" value="ECO:0000318"/>
    <property type="project" value="GO_Central"/>
</dbReference>
<dbReference type="GO" id="GO:0005524">
    <property type="term" value="F:ATP binding"/>
    <property type="evidence" value="ECO:0007669"/>
    <property type="project" value="UniProtKB-KW"/>
</dbReference>
<dbReference type="GO" id="GO:0106310">
    <property type="term" value="F:protein serine kinase activity"/>
    <property type="evidence" value="ECO:0007669"/>
    <property type="project" value="RHEA"/>
</dbReference>
<dbReference type="GO" id="GO:0004674">
    <property type="term" value="F:protein serine/threonine kinase activity"/>
    <property type="evidence" value="ECO:0000318"/>
    <property type="project" value="GO_Central"/>
</dbReference>
<dbReference type="GO" id="GO:0007165">
    <property type="term" value="P:signal transduction"/>
    <property type="evidence" value="ECO:0000318"/>
    <property type="project" value="GO_Central"/>
</dbReference>
<dbReference type="CDD" id="cd22671">
    <property type="entry name" value="FHA_APTX-like"/>
    <property type="match status" value="1"/>
</dbReference>
<dbReference type="CDD" id="cd13999">
    <property type="entry name" value="STKc_MAP3K-like"/>
    <property type="match status" value="1"/>
</dbReference>
<dbReference type="FunFam" id="3.30.200.20:FF:000180">
    <property type="entry name" value="serine/threonine-protein kinase STY46-like"/>
    <property type="match status" value="1"/>
</dbReference>
<dbReference type="Gene3D" id="2.60.200.20">
    <property type="match status" value="1"/>
</dbReference>
<dbReference type="Gene3D" id="3.30.200.20">
    <property type="entry name" value="Phosphorylase Kinase, domain 1"/>
    <property type="match status" value="2"/>
</dbReference>
<dbReference type="Gene3D" id="1.10.510.10">
    <property type="entry name" value="Transferase(Phosphotransferase) domain 1"/>
    <property type="match status" value="2"/>
</dbReference>
<dbReference type="InterPro" id="IPR011009">
    <property type="entry name" value="Kinase-like_dom_sf"/>
</dbReference>
<dbReference type="InterPro" id="IPR000719">
    <property type="entry name" value="Prot_kinase_dom"/>
</dbReference>
<dbReference type="InterPro" id="IPR001245">
    <property type="entry name" value="Ser-Thr/Tyr_kinase_cat_dom"/>
</dbReference>
<dbReference type="InterPro" id="IPR008271">
    <property type="entry name" value="Ser/Thr_kinase_AS"/>
</dbReference>
<dbReference type="InterPro" id="IPR051681">
    <property type="entry name" value="Ser/Thr_Kinases-Pseudokinases"/>
</dbReference>
<dbReference type="InterPro" id="IPR008984">
    <property type="entry name" value="SMAD_FHA_dom_sf"/>
</dbReference>
<dbReference type="PANTHER" id="PTHR44329:SF298">
    <property type="entry name" value="MIXED LINEAGE KINASE DOMAIN-LIKE PROTEIN"/>
    <property type="match status" value="1"/>
</dbReference>
<dbReference type="PANTHER" id="PTHR44329">
    <property type="entry name" value="SERINE/THREONINE-PROTEIN KINASE TNNI3K-RELATED"/>
    <property type="match status" value="1"/>
</dbReference>
<dbReference type="Pfam" id="PF07714">
    <property type="entry name" value="PK_Tyr_Ser-Thr"/>
    <property type="match status" value="3"/>
</dbReference>
<dbReference type="SMART" id="SM00220">
    <property type="entry name" value="S_TKc"/>
    <property type="match status" value="1"/>
</dbReference>
<dbReference type="SUPFAM" id="SSF56112">
    <property type="entry name" value="Protein kinase-like (PK-like)"/>
    <property type="match status" value="2"/>
</dbReference>
<dbReference type="SUPFAM" id="SSF49879">
    <property type="entry name" value="SMAD/FHA domain"/>
    <property type="match status" value="1"/>
</dbReference>
<dbReference type="PROSITE" id="PS50011">
    <property type="entry name" value="PROTEIN_KINASE_DOM"/>
    <property type="match status" value="2"/>
</dbReference>
<dbReference type="PROSITE" id="PS00108">
    <property type="entry name" value="PROTEIN_KINASE_ST"/>
    <property type="match status" value="1"/>
</dbReference>
<proteinExistence type="inferred from homology"/>
<name>Y9871_DICDI</name>
<sequence>MATLDLCNNEHLNETESADEEDDQLQTPIKTVVTLKFKENPDSTSPIQVFQLNIGSNIIGRGSPSFLNDIKISRRHAEIIVSAEVGNVTFNQLGQNHSTLYRKDQTPIKMVRGISNQLLDDDLISLYDGSIPFSIHIERDNQFMSVCEGNFILTQDAADTNYHINSPTKTITTTSTTTTTTETLIKNIDNNNNNNNNNNNNNNNNNNNNNNNNNNNNNNNNNNNNNNNNNNNNNNNNNNNNNNNSILSKRSRDNENNHNHQYIHHDKTPLTLQQQQQLQNQQQLHQQQQQQLQYEQLQQLQQLQQHQQQQQHQQQQQQQQQQQQQQQQQQQQQQFKKHKRENTPVIVEDSLKLNIQENELLFIKKIGSGACGEVCQYEWKGTPVAVKTIFKSLLRKDKKEEFEKEVSILKCLRHPNVVLFMGTCLLNGNLAIITEYLNRGSLRDVLTTMNKSELSLSVKVKMLIDVAQGMNYLHTYSPPIIHRDLKSLNLLVDNNFNVKVSDFGLSRFISGGIGSSAKTFCGTLSWIAPEVFNGSGYTTKVDVYSFGIVLWEILTHKQPSGNISATSLGHPELPSNCPQSFSDLIKECCNRNPDQRPNFSQILLKLKLMYNQINNNNNNNKIDSSSFHNNNNNCSYNNSNDNNGILVTGGVGGNVSGNVESNNNNNNNTLNGAGNVIILNEIKDFTIQPNEITNIKTIIVKDSYSILEGQYKGKLVSIKQINGSINDFEMKQLGVLASIKSPLAVRFIGVVFNTDEYAIISEHVGNNGSLLTLMQNHSNQLNWSNTIDLAIQITQSIQYLHKHQPPILHRNITSDCFLLSSLNNNSNQNNNNNNNNNNNNNNNNNNNNNNNKKNDGGDDNGENTNTTTTTTTTTTTATNITNELNINEIKIKVHDFGLSRFNTQENEESLKEIKGNFLYSPPELLSLNTYSNKSDIYSLSIVLYELFETCLTKTYKKPYHEVTLDFDFQIIHKTSKLNLRPTISNNMPNEISKILQQGWFSDSVLRPSLDTIIKELLICKKNLC</sequence>
<comment type="catalytic activity">
    <reaction>
        <text>L-seryl-[protein] + ATP = O-phospho-L-seryl-[protein] + ADP + H(+)</text>
        <dbReference type="Rhea" id="RHEA:17989"/>
        <dbReference type="Rhea" id="RHEA-COMP:9863"/>
        <dbReference type="Rhea" id="RHEA-COMP:11604"/>
        <dbReference type="ChEBI" id="CHEBI:15378"/>
        <dbReference type="ChEBI" id="CHEBI:29999"/>
        <dbReference type="ChEBI" id="CHEBI:30616"/>
        <dbReference type="ChEBI" id="CHEBI:83421"/>
        <dbReference type="ChEBI" id="CHEBI:456216"/>
        <dbReference type="EC" id="2.7.11.1"/>
    </reaction>
</comment>
<comment type="catalytic activity">
    <reaction>
        <text>L-threonyl-[protein] + ATP = O-phospho-L-threonyl-[protein] + ADP + H(+)</text>
        <dbReference type="Rhea" id="RHEA:46608"/>
        <dbReference type="Rhea" id="RHEA-COMP:11060"/>
        <dbReference type="Rhea" id="RHEA-COMP:11605"/>
        <dbReference type="ChEBI" id="CHEBI:15378"/>
        <dbReference type="ChEBI" id="CHEBI:30013"/>
        <dbReference type="ChEBI" id="CHEBI:30616"/>
        <dbReference type="ChEBI" id="CHEBI:61977"/>
        <dbReference type="ChEBI" id="CHEBI:456216"/>
        <dbReference type="EC" id="2.7.11.1"/>
    </reaction>
</comment>
<comment type="domain">
    <text>The protein kinase domain 2 is predicted to be catalytically inactive.</text>
</comment>
<comment type="similarity">
    <text evidence="4">Belongs to the protein kinase superfamily. TKL Ser/Thr protein kinase family.</text>
</comment>
<keyword id="KW-0067">ATP-binding</keyword>
<keyword id="KW-0418">Kinase</keyword>
<keyword id="KW-0547">Nucleotide-binding</keyword>
<keyword id="KW-1185">Reference proteome</keyword>
<keyword id="KW-0677">Repeat</keyword>
<keyword id="KW-0723">Serine/threonine-protein kinase</keyword>
<keyword id="KW-0808">Transferase</keyword>
<reference key="1">
    <citation type="journal article" date="2002" name="Nature">
        <title>Sequence and analysis of chromosome 2 of Dictyostelium discoideum.</title>
        <authorList>
            <person name="Gloeckner G."/>
            <person name="Eichinger L."/>
            <person name="Szafranski K."/>
            <person name="Pachebat J.A."/>
            <person name="Bankier A.T."/>
            <person name="Dear P.H."/>
            <person name="Lehmann R."/>
            <person name="Baumgart C."/>
            <person name="Parra G."/>
            <person name="Abril J.F."/>
            <person name="Guigo R."/>
            <person name="Kumpf K."/>
            <person name="Tunggal B."/>
            <person name="Cox E.C."/>
            <person name="Quail M.A."/>
            <person name="Platzer M."/>
            <person name="Rosenthal A."/>
            <person name="Noegel A.A."/>
        </authorList>
    </citation>
    <scope>NUCLEOTIDE SEQUENCE [LARGE SCALE GENOMIC DNA]</scope>
    <source>
        <strain>AX4</strain>
    </source>
</reference>
<reference key="2">
    <citation type="journal article" date="2005" name="Nature">
        <title>The genome of the social amoeba Dictyostelium discoideum.</title>
        <authorList>
            <person name="Eichinger L."/>
            <person name="Pachebat J.A."/>
            <person name="Gloeckner G."/>
            <person name="Rajandream M.A."/>
            <person name="Sucgang R."/>
            <person name="Berriman M."/>
            <person name="Song J."/>
            <person name="Olsen R."/>
            <person name="Szafranski K."/>
            <person name="Xu Q."/>
            <person name="Tunggal B."/>
            <person name="Kummerfeld S."/>
            <person name="Madera M."/>
            <person name="Konfortov B.A."/>
            <person name="Rivero F."/>
            <person name="Bankier A.T."/>
            <person name="Lehmann R."/>
            <person name="Hamlin N."/>
            <person name="Davies R."/>
            <person name="Gaudet P."/>
            <person name="Fey P."/>
            <person name="Pilcher K."/>
            <person name="Chen G."/>
            <person name="Saunders D."/>
            <person name="Sodergren E.J."/>
            <person name="Davis P."/>
            <person name="Kerhornou A."/>
            <person name="Nie X."/>
            <person name="Hall N."/>
            <person name="Anjard C."/>
            <person name="Hemphill L."/>
            <person name="Bason N."/>
            <person name="Farbrother P."/>
            <person name="Desany B."/>
            <person name="Just E."/>
            <person name="Morio T."/>
            <person name="Rost R."/>
            <person name="Churcher C.M."/>
            <person name="Cooper J."/>
            <person name="Haydock S."/>
            <person name="van Driessche N."/>
            <person name="Cronin A."/>
            <person name="Goodhead I."/>
            <person name="Muzny D.M."/>
            <person name="Mourier T."/>
            <person name="Pain A."/>
            <person name="Lu M."/>
            <person name="Harper D."/>
            <person name="Lindsay R."/>
            <person name="Hauser H."/>
            <person name="James K.D."/>
            <person name="Quiles M."/>
            <person name="Madan Babu M."/>
            <person name="Saito T."/>
            <person name="Buchrieser C."/>
            <person name="Wardroper A."/>
            <person name="Felder M."/>
            <person name="Thangavelu M."/>
            <person name="Johnson D."/>
            <person name="Knights A."/>
            <person name="Loulseged H."/>
            <person name="Mungall K.L."/>
            <person name="Oliver K."/>
            <person name="Price C."/>
            <person name="Quail M.A."/>
            <person name="Urushihara H."/>
            <person name="Hernandez J."/>
            <person name="Rabbinowitsch E."/>
            <person name="Steffen D."/>
            <person name="Sanders M."/>
            <person name="Ma J."/>
            <person name="Kohara Y."/>
            <person name="Sharp S."/>
            <person name="Simmonds M.N."/>
            <person name="Spiegler S."/>
            <person name="Tivey A."/>
            <person name="Sugano S."/>
            <person name="White B."/>
            <person name="Walker D."/>
            <person name="Woodward J.R."/>
            <person name="Winckler T."/>
            <person name="Tanaka Y."/>
            <person name="Shaulsky G."/>
            <person name="Schleicher M."/>
            <person name="Weinstock G.M."/>
            <person name="Rosenthal A."/>
            <person name="Cox E.C."/>
            <person name="Chisholm R.L."/>
            <person name="Gibbs R.A."/>
            <person name="Loomis W.F."/>
            <person name="Platzer M."/>
            <person name="Kay R.R."/>
            <person name="Williams J.G."/>
            <person name="Dear P.H."/>
            <person name="Noegel A.A."/>
            <person name="Barrell B.G."/>
            <person name="Kuspa A."/>
        </authorList>
    </citation>
    <scope>NUCLEOTIDE SEQUENCE [LARGE SCALE GENOMIC DNA]</scope>
    <source>
        <strain>AX4</strain>
    </source>
</reference>
<accession>Q86HG9</accession>
<accession>Q55AN7</accession>
<organism>
    <name type="scientific">Dictyostelium discoideum</name>
    <name type="common">Social amoeba</name>
    <dbReference type="NCBI Taxonomy" id="44689"/>
    <lineage>
        <taxon>Eukaryota</taxon>
        <taxon>Amoebozoa</taxon>
        <taxon>Evosea</taxon>
        <taxon>Eumycetozoa</taxon>
        <taxon>Dictyostelia</taxon>
        <taxon>Dictyosteliales</taxon>
        <taxon>Dictyosteliaceae</taxon>
        <taxon>Dictyostelium</taxon>
    </lineage>
</organism>
<protein>
    <recommendedName>
        <fullName>Probable serine/threonine-protein kinase DDB_G0271682</fullName>
        <ecNumber>2.7.11.1</ecNumber>
    </recommendedName>
</protein>